<protein>
    <recommendedName>
        <fullName evidence="5">Pre-mRNA-processing factor 39-2</fullName>
        <shortName evidence="5">AtPRP39-2</shortName>
    </recommendedName>
    <alternativeName>
        <fullName evidence="6">PRP39 homolog B</fullName>
    </alternativeName>
    <alternativeName>
        <fullName evidence="5">Pre-mRNA-processing factor 39b</fullName>
    </alternativeName>
</protein>
<name>PR39B_ARATH</name>
<organism>
    <name type="scientific">Arabidopsis thaliana</name>
    <name type="common">Mouse-ear cress</name>
    <dbReference type="NCBI Taxonomy" id="3702"/>
    <lineage>
        <taxon>Eukaryota</taxon>
        <taxon>Viridiplantae</taxon>
        <taxon>Streptophyta</taxon>
        <taxon>Embryophyta</taxon>
        <taxon>Tracheophyta</taxon>
        <taxon>Spermatophyta</taxon>
        <taxon>Magnoliopsida</taxon>
        <taxon>eudicotyledons</taxon>
        <taxon>Gunneridae</taxon>
        <taxon>Pentapetalae</taxon>
        <taxon>rosids</taxon>
        <taxon>malvids</taxon>
        <taxon>Brassicales</taxon>
        <taxon>Brassicaceae</taxon>
        <taxon>Camelineae</taxon>
        <taxon>Arabidopsis</taxon>
    </lineage>
</organism>
<dbReference type="EMBL" id="AB010698">
    <property type="protein sequence ID" value="BAB11095.1"/>
    <property type="status" value="ALT_SEQ"/>
    <property type="molecule type" value="Genomic_DNA"/>
</dbReference>
<dbReference type="EMBL" id="CP002688">
    <property type="protein sequence ID" value="AED95379.1"/>
    <property type="molecule type" value="Genomic_DNA"/>
</dbReference>
<dbReference type="RefSeq" id="NP_199452.2">
    <property type="nucleotide sequence ID" value="NM_124010.3"/>
</dbReference>
<dbReference type="SMR" id="F4KHG8"/>
<dbReference type="FunCoup" id="F4KHG8">
    <property type="interactions" value="3203"/>
</dbReference>
<dbReference type="STRING" id="3702.F4KHG8"/>
<dbReference type="iPTMnet" id="F4KHG8"/>
<dbReference type="PaxDb" id="3702-AT5G46400.1"/>
<dbReference type="ProteomicsDB" id="199352"/>
<dbReference type="EnsemblPlants" id="AT5G46400.1">
    <property type="protein sequence ID" value="AT5G46400.1"/>
    <property type="gene ID" value="AT5G46400"/>
</dbReference>
<dbReference type="GeneID" id="834683"/>
<dbReference type="Gramene" id="AT5G46400.1">
    <property type="protein sequence ID" value="AT5G46400.1"/>
    <property type="gene ID" value="AT5G46400"/>
</dbReference>
<dbReference type="KEGG" id="ath:AT5G46400"/>
<dbReference type="Araport" id="AT5G46400"/>
<dbReference type="TAIR" id="AT5G46400">
    <property type="gene designation" value="PRP39-2"/>
</dbReference>
<dbReference type="eggNOG" id="KOG1258">
    <property type="taxonomic scope" value="Eukaryota"/>
</dbReference>
<dbReference type="HOGENOM" id="CLU_007864_0_0_1"/>
<dbReference type="InParanoid" id="F4KHG8"/>
<dbReference type="OMA" id="KEKIKCR"/>
<dbReference type="PRO" id="PR:F4KHG8"/>
<dbReference type="Proteomes" id="UP000006548">
    <property type="component" value="Chromosome 5"/>
</dbReference>
<dbReference type="ExpressionAtlas" id="F4KHG8">
    <property type="expression patterns" value="baseline and differential"/>
</dbReference>
<dbReference type="GO" id="GO:0005634">
    <property type="term" value="C:nucleus"/>
    <property type="evidence" value="ECO:0007669"/>
    <property type="project" value="UniProtKB-SubCell"/>
</dbReference>
<dbReference type="GO" id="GO:0006397">
    <property type="term" value="P:mRNA processing"/>
    <property type="evidence" value="ECO:0007669"/>
    <property type="project" value="UniProtKB-KW"/>
</dbReference>
<dbReference type="GO" id="GO:0008380">
    <property type="term" value="P:RNA splicing"/>
    <property type="evidence" value="ECO:0007669"/>
    <property type="project" value="UniProtKB-KW"/>
</dbReference>
<dbReference type="FunFam" id="1.25.40.10:FF:000064">
    <property type="entry name" value="Putative pre-mrna-processing factor 39"/>
    <property type="match status" value="1"/>
</dbReference>
<dbReference type="FunFam" id="1.25.40.10:FF:000159">
    <property type="entry name" value="Tetratricopeptide repeat (TPR)-like superfamily protein"/>
    <property type="match status" value="1"/>
</dbReference>
<dbReference type="Gene3D" id="1.25.40.10">
    <property type="entry name" value="Tetratricopeptide repeat domain"/>
    <property type="match status" value="2"/>
</dbReference>
<dbReference type="InterPro" id="IPR003107">
    <property type="entry name" value="HAT"/>
</dbReference>
<dbReference type="InterPro" id="IPR011990">
    <property type="entry name" value="TPR-like_helical_dom_sf"/>
</dbReference>
<dbReference type="PANTHER" id="PTHR17204">
    <property type="entry name" value="PRE-MRNA PROCESSING PROTEIN PRP39-RELATED"/>
    <property type="match status" value="1"/>
</dbReference>
<dbReference type="PANTHER" id="PTHR17204:SF26">
    <property type="entry name" value="PRE-MRNA-PROCESSING FACTOR 39-2"/>
    <property type="match status" value="1"/>
</dbReference>
<dbReference type="Pfam" id="PF23241">
    <property type="entry name" value="HAT_PRP39_C"/>
    <property type="match status" value="1"/>
</dbReference>
<dbReference type="Pfam" id="PF23240">
    <property type="entry name" value="HAT_PRP39_N"/>
    <property type="match status" value="1"/>
</dbReference>
<dbReference type="SMART" id="SM00386">
    <property type="entry name" value="HAT"/>
    <property type="match status" value="4"/>
</dbReference>
<dbReference type="SUPFAM" id="SSF48452">
    <property type="entry name" value="TPR-like"/>
    <property type="match status" value="2"/>
</dbReference>
<evidence type="ECO:0000250" key="1">
    <source>
        <dbReference type="UniProtKB" id="P39682"/>
    </source>
</evidence>
<evidence type="ECO:0000250" key="2">
    <source>
        <dbReference type="UniProtKB" id="Q93ZR3"/>
    </source>
</evidence>
<evidence type="ECO:0000255" key="3"/>
<evidence type="ECO:0000256" key="4">
    <source>
        <dbReference type="SAM" id="MobiDB-lite"/>
    </source>
</evidence>
<evidence type="ECO:0000303" key="5">
    <source>
    </source>
</evidence>
<evidence type="ECO:0000305" key="6"/>
<evidence type="ECO:0000312" key="7">
    <source>
        <dbReference type="Araport" id="AT5G46400"/>
    </source>
</evidence>
<evidence type="ECO:0000312" key="8">
    <source>
        <dbReference type="EMBL" id="BAB11095.1"/>
    </source>
</evidence>
<feature type="chain" id="PRO_0000454966" description="Pre-mRNA-processing factor 39-2">
    <location>
        <begin position="1"/>
        <end position="1036"/>
    </location>
</feature>
<feature type="repeat" description="HAT 1" evidence="3">
    <location>
        <begin position="62"/>
        <end position="94"/>
    </location>
</feature>
<feature type="repeat" description="HAT 2" evidence="3">
    <location>
        <begin position="96"/>
        <end position="128"/>
    </location>
</feature>
<feature type="repeat" description="HAT 3" evidence="3">
    <location>
        <begin position="131"/>
        <end position="166"/>
    </location>
</feature>
<feature type="repeat" description="HAT 4" evidence="3">
    <location>
        <begin position="168"/>
        <end position="201"/>
    </location>
</feature>
<feature type="repeat" description="HAT 5" evidence="3">
    <location>
        <begin position="278"/>
        <end position="310"/>
    </location>
</feature>
<feature type="repeat" description="HAT 6" evidence="3">
    <location>
        <begin position="312"/>
        <end position="344"/>
    </location>
</feature>
<feature type="region of interest" description="Disordered" evidence="4">
    <location>
        <begin position="1"/>
        <end position="24"/>
    </location>
</feature>
<feature type="region of interest" description="Disordered" evidence="4">
    <location>
        <begin position="595"/>
        <end position="618"/>
    </location>
</feature>
<feature type="region of interest" description="Disordered" evidence="4">
    <location>
        <begin position="714"/>
        <end position="767"/>
    </location>
</feature>
<feature type="region of interest" description="Disordered" evidence="4">
    <location>
        <begin position="995"/>
        <end position="1036"/>
    </location>
</feature>
<feature type="compositionally biased region" description="Low complexity" evidence="4">
    <location>
        <begin position="714"/>
        <end position="726"/>
    </location>
</feature>
<feature type="compositionally biased region" description="Basic and acidic residues" evidence="4">
    <location>
        <begin position="740"/>
        <end position="755"/>
    </location>
</feature>
<feature type="compositionally biased region" description="Polar residues" evidence="4">
    <location>
        <begin position="1002"/>
        <end position="1036"/>
    </location>
</feature>
<accession>F4KHG8</accession>
<accession>Q9FL22</accession>
<comment type="function">
    <text evidence="2">Involved in pre-mRNA splicing.</text>
</comment>
<comment type="subcellular location">
    <subcellularLocation>
        <location evidence="1">Nucleus</location>
    </subcellularLocation>
</comment>
<comment type="similarity">
    <text evidence="6">Belongs to the PRP39 family.</text>
</comment>
<comment type="sequence caution" evidence="6">
    <conflict type="erroneous gene model prediction">
        <sequence resource="EMBL-CDS" id="BAB11095"/>
    </conflict>
</comment>
<proteinExistence type="inferred from homology"/>
<sequence>MVTTEVRTAVSDKEPLQRSPELDSSTDFLDNDRLKETFSSGALDFDEWTLLISEIETTSFPDDIEKLCLVYDAFLLEFPLCHGYWRKYAYHKIKLCTLEDAVEVFERAVQAATYSVAVWLDYCAFAVAAYEDPHDVSRLFERGLSFIGKDYSCCTLWDKYIEYLLGQQQWSSLANVYLRTLKYPSKKLDLYYKNFRKIAASLKEKIKCRIDVNGDLSSDPMEEDLVHTRHTDEEISIVVRELMGPSSSSAVSKALHTYLSIGEQFYQDSRQLMEKISCFETQIRRPYFHVKPLDTNQLDNWHAYLSFGETYGDFDWAINLYERCLIPCANYTEFWFRYVDFVESKGGRELANFALARASQTFVKSASVIHLFNARFKEHVGDASAASVALSRCGEELGFGFVENVTKKANMEKRLGNFEAAVTTYREALNKTLIGKENLETTARLYVQFSRLKYVITNSADDAAQILLEGNENVPHCKLLLEELMRLLMMHGGSRQVDLLDPIIDKELSHQADSSDGLSAEDKEEISNLYMEFIDLSGTIHDVRKALGRHIKLFPHSARAKLRGSRPSGNLFRELIQRREKTRERLNQDLLTNKGISSIVDSPPKEKKESSLDSYGTQSKDAVRADYVNTEPNQGCLTSGHLVEGNDNVIERETLCESQSDLSMGLKANEGGKRSHEVSLPIQASPEHGFVTKQAHFSSNSVDTVKSDAIVIQPSGSQSPQSYQSQESLRQTGRNRYHRRDLNQMHRDSKPRSQERPPQMPYSPVGTGREILGQHMAFTHQDNRVALQSSTSQNPQNQFQNSALQMHPVVQTSNAYPQSQIHGQHMIVSPPESQNPQNQCQNSTSQVQTSFAYPQTQIPQNPVQSNYQQEGQMQSHEAYNQMWQQYYYSYYYYQQQQQLMSEQPQPNQNPQPQLDQNLVQLLSKQYQSQAKTQYLQPQQVEQVNTQQQSQEPQNQQQIQFQQQQQQQEWFQQQQQWQQQQYLLYIQQQQLQGEAKGDEQRLSMPQGSTTNSDIQKSQESGAVNEANLSSDTSISSI</sequence>
<reference key="1">
    <citation type="journal article" date="1998" name="DNA Res.">
        <title>Structural analysis of Arabidopsis thaliana chromosome 5. V. Sequence features of the regions of 1,381,565 bp covered by twenty one physically assigned P1 and TAC clones.</title>
        <authorList>
            <person name="Kaneko T."/>
            <person name="Kotani H."/>
            <person name="Nakamura Y."/>
            <person name="Sato S."/>
            <person name="Asamizu E."/>
            <person name="Miyajima N."/>
            <person name="Tabata S."/>
        </authorList>
    </citation>
    <scope>NUCLEOTIDE SEQUENCE [LARGE SCALE GENOMIC DNA]</scope>
    <source>
        <strain>cv. Columbia</strain>
    </source>
</reference>
<reference key="2">
    <citation type="journal article" date="2017" name="Plant J.">
        <title>Araport11: a complete reannotation of the Arabidopsis thaliana reference genome.</title>
        <authorList>
            <person name="Cheng C.Y."/>
            <person name="Krishnakumar V."/>
            <person name="Chan A.P."/>
            <person name="Thibaud-Nissen F."/>
            <person name="Schobel S."/>
            <person name="Town C.D."/>
        </authorList>
    </citation>
    <scope>GENOME REANNOTATION</scope>
    <source>
        <strain>cv. Columbia</strain>
    </source>
</reference>
<reference key="3">
    <citation type="journal article" date="2017" name="Genetics">
        <title>A genetic screen for pre-mRNA splicing mutants of Arabidopsis thaliana identifies putative U1 snRNP components RBM25 and PRP39a.</title>
        <authorList>
            <person name="Kanno T."/>
            <person name="Lin W.-D."/>
            <person name="Fu J.L."/>
            <person name="Chang C.-L."/>
            <person name="Matzke A.J.M."/>
            <person name="Matzke M."/>
        </authorList>
    </citation>
    <scope>GENE FAMILY</scope>
    <scope>NOMENCLATURE</scope>
    <source>
        <strain>cv. Columbia</strain>
    </source>
</reference>
<keyword id="KW-0507">mRNA processing</keyword>
<keyword id="KW-0508">mRNA splicing</keyword>
<keyword id="KW-0539">Nucleus</keyword>
<keyword id="KW-1185">Reference proteome</keyword>
<keyword id="KW-0677">Repeat</keyword>
<gene>
    <name evidence="5" type="primary">PRP39-2</name>
    <name evidence="5" type="synonym">PRP39b</name>
    <name evidence="7" type="ordered locus">At5g46400</name>
    <name evidence="8" type="ORF">MPL12.20</name>
</gene>